<name>FABF_STAAU</name>
<gene>
    <name type="primary">fabF</name>
</gene>
<reference key="1">
    <citation type="submission" date="2004-11" db="EMBL/GenBank/DDBJ databases">
        <title>Cloning and expression of Staphylococcus aureus Smith fab genes.</title>
        <authorList>
            <person name="Morita Y."/>
            <person name="Ikeno S."/>
            <person name="Tsuchiya K.S."/>
        </authorList>
    </citation>
    <scope>NUCLEOTIDE SEQUENCE [GENOMIC DNA]</scope>
    <source>
        <strain>Smith</strain>
    </source>
</reference>
<evidence type="ECO:0000250" key="1">
    <source>
        <dbReference type="UniProtKB" id="P0AAI5"/>
    </source>
</evidence>
<evidence type="ECO:0000255" key="2">
    <source>
        <dbReference type="PROSITE-ProRule" id="PRU01348"/>
    </source>
</evidence>
<evidence type="ECO:0000305" key="3"/>
<dbReference type="EC" id="2.3.1.179" evidence="1"/>
<dbReference type="EMBL" id="AB195291">
    <property type="protein sequence ID" value="BAD72839.1"/>
    <property type="molecule type" value="Genomic_DNA"/>
</dbReference>
<dbReference type="SMR" id="Q5TKS0"/>
<dbReference type="BindingDB" id="Q5TKS0"/>
<dbReference type="ChEMBL" id="CHEMBL5341"/>
<dbReference type="UniPathway" id="UPA00094"/>
<dbReference type="GO" id="GO:0005829">
    <property type="term" value="C:cytosol"/>
    <property type="evidence" value="ECO:0007669"/>
    <property type="project" value="TreeGrafter"/>
</dbReference>
<dbReference type="GO" id="GO:0004315">
    <property type="term" value="F:3-oxoacyl-[acyl-carrier-protein] synthase activity"/>
    <property type="evidence" value="ECO:0007669"/>
    <property type="project" value="UniProtKB-EC"/>
</dbReference>
<dbReference type="GO" id="GO:0006633">
    <property type="term" value="P:fatty acid biosynthetic process"/>
    <property type="evidence" value="ECO:0007669"/>
    <property type="project" value="UniProtKB-UniPathway"/>
</dbReference>
<dbReference type="CDD" id="cd00834">
    <property type="entry name" value="KAS_I_II"/>
    <property type="match status" value="1"/>
</dbReference>
<dbReference type="FunFam" id="3.40.47.10:FF:000026">
    <property type="entry name" value="3-oxoacyl-[acyl-carrier-protein] synthase 2"/>
    <property type="match status" value="1"/>
</dbReference>
<dbReference type="Gene3D" id="3.40.47.10">
    <property type="match status" value="2"/>
</dbReference>
<dbReference type="InterPro" id="IPR017568">
    <property type="entry name" value="3-oxoacyl-ACP_synth-2"/>
</dbReference>
<dbReference type="InterPro" id="IPR000794">
    <property type="entry name" value="Beta-ketoacyl_synthase"/>
</dbReference>
<dbReference type="InterPro" id="IPR018201">
    <property type="entry name" value="Ketoacyl_synth_AS"/>
</dbReference>
<dbReference type="InterPro" id="IPR014031">
    <property type="entry name" value="Ketoacyl_synth_C"/>
</dbReference>
<dbReference type="InterPro" id="IPR014030">
    <property type="entry name" value="Ketoacyl_synth_N"/>
</dbReference>
<dbReference type="InterPro" id="IPR020841">
    <property type="entry name" value="PKS_Beta-ketoAc_synthase_dom"/>
</dbReference>
<dbReference type="InterPro" id="IPR016039">
    <property type="entry name" value="Thiolase-like"/>
</dbReference>
<dbReference type="NCBIfam" id="TIGR03150">
    <property type="entry name" value="fabF"/>
    <property type="match status" value="1"/>
</dbReference>
<dbReference type="NCBIfam" id="NF004970">
    <property type="entry name" value="PRK06333.1"/>
    <property type="match status" value="1"/>
</dbReference>
<dbReference type="NCBIfam" id="NF005589">
    <property type="entry name" value="PRK07314.1"/>
    <property type="match status" value="1"/>
</dbReference>
<dbReference type="PANTHER" id="PTHR11712:SF336">
    <property type="entry name" value="3-OXOACYL-[ACYL-CARRIER-PROTEIN] SYNTHASE, MITOCHONDRIAL"/>
    <property type="match status" value="1"/>
</dbReference>
<dbReference type="PANTHER" id="PTHR11712">
    <property type="entry name" value="POLYKETIDE SYNTHASE-RELATED"/>
    <property type="match status" value="1"/>
</dbReference>
<dbReference type="Pfam" id="PF00109">
    <property type="entry name" value="ketoacyl-synt"/>
    <property type="match status" value="1"/>
</dbReference>
<dbReference type="Pfam" id="PF02801">
    <property type="entry name" value="Ketoacyl-synt_C"/>
    <property type="match status" value="1"/>
</dbReference>
<dbReference type="PIRSF" id="PIRSF000447">
    <property type="entry name" value="KAS_II"/>
    <property type="match status" value="1"/>
</dbReference>
<dbReference type="SMART" id="SM00825">
    <property type="entry name" value="PKS_KS"/>
    <property type="match status" value="1"/>
</dbReference>
<dbReference type="SUPFAM" id="SSF53901">
    <property type="entry name" value="Thiolase-like"/>
    <property type="match status" value="2"/>
</dbReference>
<dbReference type="PROSITE" id="PS00606">
    <property type="entry name" value="KS3_1"/>
    <property type="match status" value="1"/>
</dbReference>
<dbReference type="PROSITE" id="PS52004">
    <property type="entry name" value="KS3_2"/>
    <property type="match status" value="1"/>
</dbReference>
<accession>Q5TKS0</accession>
<keyword id="KW-0012">Acyltransferase</keyword>
<keyword id="KW-0275">Fatty acid biosynthesis</keyword>
<keyword id="KW-0276">Fatty acid metabolism</keyword>
<keyword id="KW-0444">Lipid biosynthesis</keyword>
<keyword id="KW-0443">Lipid metabolism</keyword>
<keyword id="KW-0808">Transferase</keyword>
<sequence>VITGMGALSPIGNDVKTTWENALKGVNGIDKITRIDTEPYSVHLAGELKNFNIEDHIDKKEARRMDRFTQYAIVAAREAVKDAQLDINENTADRIGVWIGSGIGGMETFEIAHKQLMDKGPRRVSPFFVPMLIPDMATGQVSIDLGAKGPNGATVTACATGTNSIGEAFKIVQRGDADAMITGGTEAPITHMAIAGFSASRALSTNDDIETACRPFQEGRDGFVMGEGAGILVIESLESAQARGANIYAEIVGYGTTGDAYHITAPAPEGEGGSRAMQAAMDDAGIEPKDVQYLNAHGTSTPVGDLNEVKAIKNTFGEAAKHLKVSSTKSMTGHLLGATGGIEAIFSALSIKDSKIAPTIHAVTPDPECDLDIVPNEAQDLDITYAMSNSLGFGGHNAVLVFK</sequence>
<feature type="chain" id="PRO_0000180319" description="3-oxoacyl-[acyl-carrier-protein] synthase 2">
    <location>
        <begin position="1" status="less than"/>
        <end position="403" status="greater than"/>
    </location>
</feature>
<feature type="domain" description="Ketosynthase family 3 (KS3)" evidence="2">
    <location>
        <begin position="1"/>
        <end position="403"/>
    </location>
</feature>
<feature type="active site" description="For beta-ketoacyl synthase activity" evidence="2">
    <location>
        <position position="158"/>
    </location>
</feature>
<feature type="active site" description="For beta-ketoacyl synthase activity" evidence="2">
    <location>
        <position position="297"/>
    </location>
</feature>
<feature type="active site" description="For beta-ketoacyl synthase activity" evidence="2">
    <location>
        <position position="334"/>
    </location>
</feature>
<feature type="non-terminal residue">
    <location>
        <position position="1"/>
    </location>
</feature>
<feature type="non-terminal residue">
    <location>
        <position position="403"/>
    </location>
</feature>
<proteinExistence type="inferred from homology"/>
<organism>
    <name type="scientific">Staphylococcus aureus</name>
    <dbReference type="NCBI Taxonomy" id="1280"/>
    <lineage>
        <taxon>Bacteria</taxon>
        <taxon>Bacillati</taxon>
        <taxon>Bacillota</taxon>
        <taxon>Bacilli</taxon>
        <taxon>Bacillales</taxon>
        <taxon>Staphylococcaceae</taxon>
        <taxon>Staphylococcus</taxon>
    </lineage>
</organism>
<comment type="function">
    <text evidence="1">Involved in the type II fatty acid elongation cycle. Catalyzes the elongation of a wide range of acyl-ACP by the addition of two carbons from malonyl-ACP to an acyl acceptor. Can efficiently catalyze the conversion of palmitoleoyl-ACP (cis-hexadec-9-enoyl-ACP) to cis-vaccenoyl-ACP (cis-octadec-11-enoyl-ACP), an essential step in the thermal regulation of fatty acid composition.</text>
</comment>
<comment type="catalytic activity">
    <reaction evidence="1">
        <text>a fatty acyl-[ACP] + malonyl-[ACP] + H(+) = a 3-oxoacyl-[ACP] + holo-[ACP] + CO2</text>
        <dbReference type="Rhea" id="RHEA:22836"/>
        <dbReference type="Rhea" id="RHEA-COMP:9623"/>
        <dbReference type="Rhea" id="RHEA-COMP:9685"/>
        <dbReference type="Rhea" id="RHEA-COMP:9916"/>
        <dbReference type="Rhea" id="RHEA-COMP:14125"/>
        <dbReference type="ChEBI" id="CHEBI:15378"/>
        <dbReference type="ChEBI" id="CHEBI:16526"/>
        <dbReference type="ChEBI" id="CHEBI:64479"/>
        <dbReference type="ChEBI" id="CHEBI:78449"/>
        <dbReference type="ChEBI" id="CHEBI:78776"/>
        <dbReference type="ChEBI" id="CHEBI:138651"/>
    </reaction>
</comment>
<comment type="catalytic activity">
    <reaction evidence="1">
        <text>(9Z)-hexadecenoyl-[ACP] + malonyl-[ACP] + H(+) = 3-oxo-(11Z)-octadecenoyl-[ACP] + holo-[ACP] + CO2</text>
        <dbReference type="Rhea" id="RHEA:55040"/>
        <dbReference type="Rhea" id="RHEA-COMP:9623"/>
        <dbReference type="Rhea" id="RHEA-COMP:9685"/>
        <dbReference type="Rhea" id="RHEA-COMP:10800"/>
        <dbReference type="Rhea" id="RHEA-COMP:14074"/>
        <dbReference type="ChEBI" id="CHEBI:15378"/>
        <dbReference type="ChEBI" id="CHEBI:16526"/>
        <dbReference type="ChEBI" id="CHEBI:64479"/>
        <dbReference type="ChEBI" id="CHEBI:78449"/>
        <dbReference type="ChEBI" id="CHEBI:83989"/>
        <dbReference type="ChEBI" id="CHEBI:138538"/>
        <dbReference type="EC" id="2.3.1.179"/>
    </reaction>
</comment>
<comment type="pathway">
    <text evidence="1">Lipid metabolism; fatty acid biosynthesis.</text>
</comment>
<comment type="similarity">
    <text evidence="3">Belongs to the thiolase-like superfamily. Beta-ketoacyl-ACP synthases family.</text>
</comment>
<protein>
    <recommendedName>
        <fullName>3-oxoacyl-[acyl-carrier-protein] synthase 2</fullName>
        <ecNumber evidence="1">2.3.1.179</ecNumber>
    </recommendedName>
    <alternativeName>
        <fullName>3-oxoacyl-[acyl-carrier-protein] synthase II</fullName>
    </alternativeName>
    <alternativeName>
        <fullName>Beta-ketoacyl-ACP synthase II</fullName>
        <shortName>KAS II</shortName>
    </alternativeName>
</protein>